<feature type="chain" id="PRO_0000261409" description="E3 ubiquitin ligase Rnf121">
    <location>
        <begin position="1"/>
        <end position="327"/>
    </location>
</feature>
<feature type="transmembrane region" description="Helical" evidence="2">
    <location>
        <begin position="50"/>
        <end position="70"/>
    </location>
</feature>
<feature type="transmembrane region" description="Helical" evidence="2">
    <location>
        <begin position="79"/>
        <end position="96"/>
    </location>
</feature>
<feature type="transmembrane region" description="Helical" evidence="2">
    <location>
        <begin position="99"/>
        <end position="119"/>
    </location>
</feature>
<feature type="transmembrane region" description="Helical" evidence="2">
    <location>
        <begin position="148"/>
        <end position="168"/>
    </location>
</feature>
<feature type="transmembrane region" description="Helical" evidence="2">
    <location>
        <begin position="173"/>
        <end position="193"/>
    </location>
</feature>
<feature type="zinc finger region" description="RING-type; atypical" evidence="3">
    <location>
        <begin position="226"/>
        <end position="276"/>
    </location>
</feature>
<reference key="1">
    <citation type="submission" date="2004-07" db="EMBL/GenBank/DDBJ databases">
        <authorList>
            <consortium name="NIH - Xenopus Gene Collection (XGC) project"/>
        </authorList>
    </citation>
    <scope>NUCLEOTIDE SEQUENCE [LARGE SCALE MRNA]</scope>
    <source>
        <tissue>Embryo</tissue>
    </source>
</reference>
<name>RN121_XENLA</name>
<proteinExistence type="evidence at transcript level"/>
<organism>
    <name type="scientific">Xenopus laevis</name>
    <name type="common">African clawed frog</name>
    <dbReference type="NCBI Taxonomy" id="8355"/>
    <lineage>
        <taxon>Eukaryota</taxon>
        <taxon>Metazoa</taxon>
        <taxon>Chordata</taxon>
        <taxon>Craniata</taxon>
        <taxon>Vertebrata</taxon>
        <taxon>Euteleostomi</taxon>
        <taxon>Amphibia</taxon>
        <taxon>Batrachia</taxon>
        <taxon>Anura</taxon>
        <taxon>Pipoidea</taxon>
        <taxon>Pipidae</taxon>
        <taxon>Xenopodinae</taxon>
        <taxon>Xenopus</taxon>
        <taxon>Xenopus</taxon>
    </lineage>
</organism>
<evidence type="ECO:0000250" key="1">
    <source>
        <dbReference type="UniProtKB" id="Q09251"/>
    </source>
</evidence>
<evidence type="ECO:0000255" key="2"/>
<evidence type="ECO:0000255" key="3">
    <source>
        <dbReference type="PROSITE-ProRule" id="PRU00175"/>
    </source>
</evidence>
<evidence type="ECO:0000305" key="4"/>
<sequence>MAAVLEVEIGGEAVREAAGEEMDLSELAPEERWRVEHARMHAKHRGHEAMHAEMVLILIATLVVAQLLLVQWKQRHQRSYNMVTLFQMWIVPVYFTVKLHWWRFLGIWIVFSIITAYITYKATRKPLLQTTPRLVYKWFLLLYKMSYATGIVGYIAVMFTLFGLNLLFRIKPEDAMDFGISLLFYGLYYGVLGRDFAELCADYMASTIGFYSASGMPTKHLSDSVCAVCGQQIFVDVNEEGIIENTYRLSCNHVFHEFCIRGWCIVGKKQTCPYCKEKVDLKRMFSNPWERPHVMYGQLLDWLRYLVAWQPVIIGLVQGINYCLGLE</sequence>
<accession>Q6DD32</accession>
<keyword id="KW-0256">Endoplasmic reticulum</keyword>
<keyword id="KW-0472">Membrane</keyword>
<keyword id="KW-0479">Metal-binding</keyword>
<keyword id="KW-1185">Reference proteome</keyword>
<keyword id="KW-0808">Transferase</keyword>
<keyword id="KW-0812">Transmembrane</keyword>
<keyword id="KW-1133">Transmembrane helix</keyword>
<keyword id="KW-0862">Zinc</keyword>
<keyword id="KW-0863">Zinc-finger</keyword>
<protein>
    <recommendedName>
        <fullName evidence="4">E3 ubiquitin ligase Rnf121</fullName>
        <ecNumber evidence="1">2.3.2.27</ecNumber>
    </recommendedName>
    <alternativeName>
        <fullName>RING finger protein 121</fullName>
    </alternativeName>
</protein>
<comment type="function">
    <text evidence="1">E3 ubiquitin ligase which accepts ubiquitin and transfers it to substrates thereby promoting their degradation by the endoplasmic reticulum-associated degradation (ERAD) pathway which is a pathway involved in ubiquitin-dependent degradation of misfolded endoplasmic reticulum proteins (By similarity). May regulate the unfolded protein response to reduce endoplasmic reticulum stress (By similarity).</text>
</comment>
<comment type="catalytic activity">
    <reaction evidence="1">
        <text>S-ubiquitinyl-[E2 ubiquitin-conjugating enzyme]-L-cysteine + [acceptor protein]-L-lysine = [E2 ubiquitin-conjugating enzyme]-L-cysteine + N(6)-ubiquitinyl-[acceptor protein]-L-lysine.</text>
        <dbReference type="EC" id="2.3.2.27"/>
    </reaction>
</comment>
<comment type="pathway">
    <text evidence="1">Protein modification; protein ubiquitination.</text>
</comment>
<comment type="subcellular location">
    <subcellularLocation>
        <location evidence="1">Endoplasmic reticulum membrane</location>
        <topology evidence="4">Multi-pass membrane protein</topology>
    </subcellularLocation>
</comment>
<comment type="similarity">
    <text evidence="4">Belongs to the RNF121 family.</text>
</comment>
<gene>
    <name type="primary">rnf121</name>
</gene>
<dbReference type="EC" id="2.3.2.27" evidence="1"/>
<dbReference type="EMBL" id="BC077797">
    <property type="protein sequence ID" value="AAH77797.1"/>
    <property type="molecule type" value="mRNA"/>
</dbReference>
<dbReference type="RefSeq" id="NP_001086939.1">
    <property type="nucleotide sequence ID" value="NM_001093470.1"/>
</dbReference>
<dbReference type="RefSeq" id="XP_018124218.1">
    <property type="nucleotide sequence ID" value="XM_018268729.1"/>
</dbReference>
<dbReference type="RefSeq" id="XP_018124219.1">
    <property type="nucleotide sequence ID" value="XM_018268730.1"/>
</dbReference>
<dbReference type="DNASU" id="446774"/>
<dbReference type="GeneID" id="446774"/>
<dbReference type="KEGG" id="xla:446774"/>
<dbReference type="AGR" id="Xenbase:XB-GENE-17334924"/>
<dbReference type="CTD" id="446774"/>
<dbReference type="Xenbase" id="XB-GENE-17334924">
    <property type="gene designation" value="rnf121.S"/>
</dbReference>
<dbReference type="OMA" id="ICADKIA"/>
<dbReference type="OrthoDB" id="446635at2759"/>
<dbReference type="UniPathway" id="UPA00143"/>
<dbReference type="Proteomes" id="UP000186698">
    <property type="component" value="Chromosome 6S"/>
</dbReference>
<dbReference type="Bgee" id="446774">
    <property type="expression patterns" value="Expressed in egg cell and 19 other cell types or tissues"/>
</dbReference>
<dbReference type="GO" id="GO:0005789">
    <property type="term" value="C:endoplasmic reticulum membrane"/>
    <property type="evidence" value="ECO:0000318"/>
    <property type="project" value="GO_Central"/>
</dbReference>
<dbReference type="GO" id="GO:0000139">
    <property type="term" value="C:Golgi membrane"/>
    <property type="evidence" value="ECO:0000318"/>
    <property type="project" value="GO_Central"/>
</dbReference>
<dbReference type="GO" id="GO:0061630">
    <property type="term" value="F:ubiquitin protein ligase activity"/>
    <property type="evidence" value="ECO:0000318"/>
    <property type="project" value="GO_Central"/>
</dbReference>
<dbReference type="GO" id="GO:0008270">
    <property type="term" value="F:zinc ion binding"/>
    <property type="evidence" value="ECO:0007669"/>
    <property type="project" value="UniProtKB-KW"/>
</dbReference>
<dbReference type="GO" id="GO:0036503">
    <property type="term" value="P:ERAD pathway"/>
    <property type="evidence" value="ECO:0000318"/>
    <property type="project" value="GO_Central"/>
</dbReference>
<dbReference type="GO" id="GO:0016567">
    <property type="term" value="P:protein ubiquitination"/>
    <property type="evidence" value="ECO:0007669"/>
    <property type="project" value="UniProtKB-UniPathway"/>
</dbReference>
<dbReference type="CDD" id="cd16475">
    <property type="entry name" value="RING-H2_RNF121-like"/>
    <property type="match status" value="1"/>
</dbReference>
<dbReference type="FunFam" id="3.30.40.10:FF:000074">
    <property type="entry name" value="Ring finger protein 121"/>
    <property type="match status" value="1"/>
</dbReference>
<dbReference type="Gene3D" id="3.30.40.10">
    <property type="entry name" value="Zinc/RING finger domain, C3HC4 (zinc finger)"/>
    <property type="match status" value="1"/>
</dbReference>
<dbReference type="InterPro" id="IPR040176">
    <property type="entry name" value="RNF121/RNF175"/>
</dbReference>
<dbReference type="InterPro" id="IPR001841">
    <property type="entry name" value="Znf_RING"/>
</dbReference>
<dbReference type="InterPro" id="IPR013083">
    <property type="entry name" value="Znf_RING/FYVE/PHD"/>
</dbReference>
<dbReference type="PANTHER" id="PTHR13407:SF1">
    <property type="entry name" value="E3 UBIQUITIN LIGASE RNF121"/>
    <property type="match status" value="1"/>
</dbReference>
<dbReference type="PANTHER" id="PTHR13407">
    <property type="entry name" value="RNF121 PROTEIN"/>
    <property type="match status" value="1"/>
</dbReference>
<dbReference type="SMART" id="SM00184">
    <property type="entry name" value="RING"/>
    <property type="match status" value="1"/>
</dbReference>
<dbReference type="SUPFAM" id="SSF57850">
    <property type="entry name" value="RING/U-box"/>
    <property type="match status" value="1"/>
</dbReference>
<dbReference type="PROSITE" id="PS50089">
    <property type="entry name" value="ZF_RING_2"/>
    <property type="match status" value="1"/>
</dbReference>